<sequence length="314" mass="33614">MKHLLSIADLDRESAVELLDEAERFEQALLGREVRKLPTLRGRTVMTVFFENSTRTRVSFEVAGKWMSADVINVSASSSSVSKGESLRDTAMTLRAAGADALIVRHPASGAAHQIAKWTGAADDGGPAVINAGDGTHEHPTQALLDALTLRQRLGDIEGKRIAIVGDILHSRVARSNALLLSMLGAEVVLVAPPTLLPVGAHTWPVTVSHSLDAELPGLDAVLMLRVQAERMNGGFFPSQREYSINYGLSEKRLAMLADHAVVLHPGPMLRGMEIASAVADSSKTAVLQQVTNGVHMRMAVLFRLLVGSEDGAL</sequence>
<comment type="function">
    <text evidence="1">Catalyzes the condensation of carbamoyl phosphate and aspartate to form carbamoyl aspartate and inorganic phosphate, the committed step in the de novo pyrimidine nucleotide biosynthesis pathway.</text>
</comment>
<comment type="catalytic activity">
    <reaction evidence="1">
        <text>carbamoyl phosphate + L-aspartate = N-carbamoyl-L-aspartate + phosphate + H(+)</text>
        <dbReference type="Rhea" id="RHEA:20013"/>
        <dbReference type="ChEBI" id="CHEBI:15378"/>
        <dbReference type="ChEBI" id="CHEBI:29991"/>
        <dbReference type="ChEBI" id="CHEBI:32814"/>
        <dbReference type="ChEBI" id="CHEBI:43474"/>
        <dbReference type="ChEBI" id="CHEBI:58228"/>
        <dbReference type="EC" id="2.1.3.2"/>
    </reaction>
</comment>
<comment type="pathway">
    <text evidence="1">Pyrimidine metabolism; UMP biosynthesis via de novo pathway; (S)-dihydroorotate from bicarbonate: step 2/3.</text>
</comment>
<comment type="subunit">
    <text evidence="1">Heterododecamer (2C3:3R2) of six catalytic PyrB chains organized as two trimers (C3), and six regulatory PyrI chains organized as three dimers (R2).</text>
</comment>
<comment type="similarity">
    <text evidence="1">Belongs to the aspartate/ornithine carbamoyltransferase superfamily. ATCase family.</text>
</comment>
<name>PYRB_RHOE4</name>
<protein>
    <recommendedName>
        <fullName evidence="1">Aspartate carbamoyltransferase catalytic subunit</fullName>
        <ecNumber evidence="1">2.1.3.2</ecNumber>
    </recommendedName>
    <alternativeName>
        <fullName evidence="1">Aspartate transcarbamylase</fullName>
        <shortName evidence="1">ATCase</shortName>
    </alternativeName>
</protein>
<gene>
    <name evidence="1" type="primary">pyrB</name>
    <name type="ordered locus">RER_30000</name>
</gene>
<feature type="chain" id="PRO_1000201599" description="Aspartate carbamoyltransferase catalytic subunit">
    <location>
        <begin position="1"/>
        <end position="314"/>
    </location>
</feature>
<feature type="binding site" evidence="1">
    <location>
        <position position="55"/>
    </location>
    <ligand>
        <name>carbamoyl phosphate</name>
        <dbReference type="ChEBI" id="CHEBI:58228"/>
    </ligand>
</feature>
<feature type="binding site" evidence="1">
    <location>
        <position position="56"/>
    </location>
    <ligand>
        <name>carbamoyl phosphate</name>
        <dbReference type="ChEBI" id="CHEBI:58228"/>
    </ligand>
</feature>
<feature type="binding site" evidence="1">
    <location>
        <position position="83"/>
    </location>
    <ligand>
        <name>L-aspartate</name>
        <dbReference type="ChEBI" id="CHEBI:29991"/>
    </ligand>
</feature>
<feature type="binding site" evidence="1">
    <location>
        <position position="105"/>
    </location>
    <ligand>
        <name>carbamoyl phosphate</name>
        <dbReference type="ChEBI" id="CHEBI:58228"/>
    </ligand>
</feature>
<feature type="binding site" evidence="1">
    <location>
        <position position="139"/>
    </location>
    <ligand>
        <name>carbamoyl phosphate</name>
        <dbReference type="ChEBI" id="CHEBI:58228"/>
    </ligand>
</feature>
<feature type="binding site" evidence="1">
    <location>
        <position position="142"/>
    </location>
    <ligand>
        <name>carbamoyl phosphate</name>
        <dbReference type="ChEBI" id="CHEBI:58228"/>
    </ligand>
</feature>
<feature type="binding site" evidence="1">
    <location>
        <position position="172"/>
    </location>
    <ligand>
        <name>L-aspartate</name>
        <dbReference type="ChEBI" id="CHEBI:29991"/>
    </ligand>
</feature>
<feature type="binding site" evidence="1">
    <location>
        <position position="226"/>
    </location>
    <ligand>
        <name>L-aspartate</name>
        <dbReference type="ChEBI" id="CHEBI:29991"/>
    </ligand>
</feature>
<feature type="binding site" evidence="1">
    <location>
        <position position="267"/>
    </location>
    <ligand>
        <name>carbamoyl phosphate</name>
        <dbReference type="ChEBI" id="CHEBI:58228"/>
    </ligand>
</feature>
<feature type="binding site" evidence="1">
    <location>
        <position position="268"/>
    </location>
    <ligand>
        <name>carbamoyl phosphate</name>
        <dbReference type="ChEBI" id="CHEBI:58228"/>
    </ligand>
</feature>
<accession>C0ZZC3</accession>
<organism>
    <name type="scientific">Rhodococcus erythropolis (strain PR4 / NBRC 100887)</name>
    <dbReference type="NCBI Taxonomy" id="234621"/>
    <lineage>
        <taxon>Bacteria</taxon>
        <taxon>Bacillati</taxon>
        <taxon>Actinomycetota</taxon>
        <taxon>Actinomycetes</taxon>
        <taxon>Mycobacteriales</taxon>
        <taxon>Nocardiaceae</taxon>
        <taxon>Rhodococcus</taxon>
        <taxon>Rhodococcus erythropolis group</taxon>
    </lineage>
</organism>
<keyword id="KW-0665">Pyrimidine biosynthesis</keyword>
<keyword id="KW-0808">Transferase</keyword>
<evidence type="ECO:0000255" key="1">
    <source>
        <dbReference type="HAMAP-Rule" id="MF_00001"/>
    </source>
</evidence>
<proteinExistence type="inferred from homology"/>
<dbReference type="EC" id="2.1.3.2" evidence="1"/>
<dbReference type="EMBL" id="AP008957">
    <property type="protein sequence ID" value="BAH33708.1"/>
    <property type="molecule type" value="Genomic_DNA"/>
</dbReference>
<dbReference type="RefSeq" id="WP_003944883.1">
    <property type="nucleotide sequence ID" value="NC_012490.1"/>
</dbReference>
<dbReference type="SMR" id="C0ZZC3"/>
<dbReference type="KEGG" id="rer:RER_30000"/>
<dbReference type="eggNOG" id="COG0540">
    <property type="taxonomic scope" value="Bacteria"/>
</dbReference>
<dbReference type="HOGENOM" id="CLU_043846_2_0_11"/>
<dbReference type="UniPathway" id="UPA00070">
    <property type="reaction ID" value="UER00116"/>
</dbReference>
<dbReference type="Proteomes" id="UP000002204">
    <property type="component" value="Chromosome"/>
</dbReference>
<dbReference type="GO" id="GO:0005829">
    <property type="term" value="C:cytosol"/>
    <property type="evidence" value="ECO:0007669"/>
    <property type="project" value="TreeGrafter"/>
</dbReference>
<dbReference type="GO" id="GO:0016597">
    <property type="term" value="F:amino acid binding"/>
    <property type="evidence" value="ECO:0007669"/>
    <property type="project" value="InterPro"/>
</dbReference>
<dbReference type="GO" id="GO:0004070">
    <property type="term" value="F:aspartate carbamoyltransferase activity"/>
    <property type="evidence" value="ECO:0007669"/>
    <property type="project" value="UniProtKB-UniRule"/>
</dbReference>
<dbReference type="GO" id="GO:0006207">
    <property type="term" value="P:'de novo' pyrimidine nucleobase biosynthetic process"/>
    <property type="evidence" value="ECO:0007669"/>
    <property type="project" value="InterPro"/>
</dbReference>
<dbReference type="GO" id="GO:0044205">
    <property type="term" value="P:'de novo' UMP biosynthetic process"/>
    <property type="evidence" value="ECO:0007669"/>
    <property type="project" value="UniProtKB-UniRule"/>
</dbReference>
<dbReference type="GO" id="GO:0006520">
    <property type="term" value="P:amino acid metabolic process"/>
    <property type="evidence" value="ECO:0007669"/>
    <property type="project" value="InterPro"/>
</dbReference>
<dbReference type="FunFam" id="3.40.50.1370:FF:000007">
    <property type="entry name" value="Aspartate carbamoyltransferase"/>
    <property type="match status" value="1"/>
</dbReference>
<dbReference type="Gene3D" id="3.40.50.1370">
    <property type="entry name" value="Aspartate/ornithine carbamoyltransferase"/>
    <property type="match status" value="2"/>
</dbReference>
<dbReference type="HAMAP" id="MF_00001">
    <property type="entry name" value="Asp_carb_tr"/>
    <property type="match status" value="1"/>
</dbReference>
<dbReference type="InterPro" id="IPR006132">
    <property type="entry name" value="Asp/Orn_carbamoyltranf_P-bd"/>
</dbReference>
<dbReference type="InterPro" id="IPR006130">
    <property type="entry name" value="Asp/Orn_carbamoylTrfase"/>
</dbReference>
<dbReference type="InterPro" id="IPR036901">
    <property type="entry name" value="Asp/Orn_carbamoylTrfase_sf"/>
</dbReference>
<dbReference type="InterPro" id="IPR002082">
    <property type="entry name" value="Asp_carbamoyltransf"/>
</dbReference>
<dbReference type="InterPro" id="IPR006131">
    <property type="entry name" value="Asp_carbamoyltransf_Asp/Orn-bd"/>
</dbReference>
<dbReference type="NCBIfam" id="TIGR00670">
    <property type="entry name" value="asp_carb_tr"/>
    <property type="match status" value="1"/>
</dbReference>
<dbReference type="NCBIfam" id="NF002032">
    <property type="entry name" value="PRK00856.1"/>
    <property type="match status" value="1"/>
</dbReference>
<dbReference type="PANTHER" id="PTHR45753:SF6">
    <property type="entry name" value="ASPARTATE CARBAMOYLTRANSFERASE"/>
    <property type="match status" value="1"/>
</dbReference>
<dbReference type="PANTHER" id="PTHR45753">
    <property type="entry name" value="ORNITHINE CARBAMOYLTRANSFERASE, MITOCHONDRIAL"/>
    <property type="match status" value="1"/>
</dbReference>
<dbReference type="Pfam" id="PF00185">
    <property type="entry name" value="OTCace"/>
    <property type="match status" value="1"/>
</dbReference>
<dbReference type="Pfam" id="PF02729">
    <property type="entry name" value="OTCace_N"/>
    <property type="match status" value="1"/>
</dbReference>
<dbReference type="PRINTS" id="PR00100">
    <property type="entry name" value="AOTCASE"/>
</dbReference>
<dbReference type="PRINTS" id="PR00101">
    <property type="entry name" value="ATCASE"/>
</dbReference>
<dbReference type="SUPFAM" id="SSF53671">
    <property type="entry name" value="Aspartate/ornithine carbamoyltransferase"/>
    <property type="match status" value="1"/>
</dbReference>
<dbReference type="PROSITE" id="PS00097">
    <property type="entry name" value="CARBAMOYLTRANSFERASE"/>
    <property type="match status" value="1"/>
</dbReference>
<reference key="1">
    <citation type="submission" date="2005-03" db="EMBL/GenBank/DDBJ databases">
        <title>Comparison of the complete genome sequences of Rhodococcus erythropolis PR4 and Rhodococcus opacus B4.</title>
        <authorList>
            <person name="Takarada H."/>
            <person name="Sekine M."/>
            <person name="Hosoyama A."/>
            <person name="Yamada R."/>
            <person name="Fujisawa T."/>
            <person name="Omata S."/>
            <person name="Shimizu A."/>
            <person name="Tsukatani N."/>
            <person name="Tanikawa S."/>
            <person name="Fujita N."/>
            <person name="Harayama S."/>
        </authorList>
    </citation>
    <scope>NUCLEOTIDE SEQUENCE [LARGE SCALE GENOMIC DNA]</scope>
    <source>
        <strain>PR4 / NBRC 100887</strain>
    </source>
</reference>